<evidence type="ECO:0000255" key="1">
    <source>
        <dbReference type="HAMAP-Rule" id="MF_00295"/>
    </source>
</evidence>
<feature type="chain" id="PRO_1000021817" description="Homoserine O-acetyltransferase">
    <location>
        <begin position="1"/>
        <end position="313"/>
    </location>
</feature>
<feature type="active site" description="Acyl-thioester intermediate" evidence="1">
    <location>
        <position position="144"/>
    </location>
</feature>
<feature type="active site" description="Proton acceptor" evidence="1">
    <location>
        <position position="236"/>
    </location>
</feature>
<feature type="active site" evidence="1">
    <location>
        <position position="238"/>
    </location>
</feature>
<feature type="binding site" evidence="1">
    <location>
        <position position="165"/>
    </location>
    <ligand>
        <name>substrate</name>
    </ligand>
</feature>
<feature type="binding site" evidence="1">
    <location>
        <position position="194"/>
    </location>
    <ligand>
        <name>substrate</name>
    </ligand>
</feature>
<feature type="binding site" evidence="1">
    <location>
        <position position="250"/>
    </location>
    <ligand>
        <name>substrate</name>
    </ligand>
</feature>
<feature type="site" description="Important for acyl-CoA specificity" evidence="1">
    <location>
        <position position="113"/>
    </location>
</feature>
<feature type="site" description="Important for substrate specificity" evidence="1">
    <location>
        <position position="194"/>
    </location>
</feature>
<reference key="1">
    <citation type="submission" date="2006-02" db="EMBL/GenBank/DDBJ databases">
        <title>Complete sequence of chromosome of Jannaschia sp. CCS1.</title>
        <authorList>
            <consortium name="US DOE Joint Genome Institute"/>
            <person name="Copeland A."/>
            <person name="Lucas S."/>
            <person name="Lapidus A."/>
            <person name="Barry K."/>
            <person name="Detter J.C."/>
            <person name="Glavina del Rio T."/>
            <person name="Hammon N."/>
            <person name="Israni S."/>
            <person name="Pitluck S."/>
            <person name="Brettin T."/>
            <person name="Bruce D."/>
            <person name="Han C."/>
            <person name="Tapia R."/>
            <person name="Gilna P."/>
            <person name="Chertkov O."/>
            <person name="Saunders E."/>
            <person name="Schmutz J."/>
            <person name="Larimer F."/>
            <person name="Land M."/>
            <person name="Kyrpides N."/>
            <person name="Lykidis A."/>
            <person name="Moran M.A."/>
            <person name="Belas R."/>
            <person name="Ye W."/>
            <person name="Buchan A."/>
            <person name="Gonzalez J.M."/>
            <person name="Schell M.A."/>
            <person name="Richardson P."/>
        </authorList>
    </citation>
    <scope>NUCLEOTIDE SEQUENCE [LARGE SCALE GENOMIC DNA]</scope>
    <source>
        <strain>CCS1</strain>
    </source>
</reference>
<keyword id="KW-0012">Acyltransferase</keyword>
<keyword id="KW-0028">Amino-acid biosynthesis</keyword>
<keyword id="KW-0963">Cytoplasm</keyword>
<keyword id="KW-0486">Methionine biosynthesis</keyword>
<keyword id="KW-1185">Reference proteome</keyword>
<keyword id="KW-0808">Transferase</keyword>
<organism>
    <name type="scientific">Jannaschia sp. (strain CCS1)</name>
    <dbReference type="NCBI Taxonomy" id="290400"/>
    <lineage>
        <taxon>Bacteria</taxon>
        <taxon>Pseudomonadati</taxon>
        <taxon>Pseudomonadota</taxon>
        <taxon>Alphaproteobacteria</taxon>
        <taxon>Rhodobacterales</taxon>
        <taxon>Roseobacteraceae</taxon>
        <taxon>Jannaschia</taxon>
    </lineage>
</organism>
<accession>Q28PU4</accession>
<dbReference type="EC" id="2.3.1.31" evidence="1"/>
<dbReference type="EMBL" id="CP000264">
    <property type="protein sequence ID" value="ABD55268.1"/>
    <property type="molecule type" value="Genomic_DNA"/>
</dbReference>
<dbReference type="RefSeq" id="WP_011455472.1">
    <property type="nucleotide sequence ID" value="NC_007802.1"/>
</dbReference>
<dbReference type="SMR" id="Q28PU4"/>
<dbReference type="STRING" id="290400.Jann_2351"/>
<dbReference type="KEGG" id="jan:Jann_2351"/>
<dbReference type="eggNOG" id="COG1897">
    <property type="taxonomic scope" value="Bacteria"/>
</dbReference>
<dbReference type="HOGENOM" id="CLU_057851_0_1_5"/>
<dbReference type="OrthoDB" id="9772423at2"/>
<dbReference type="UniPathway" id="UPA00051">
    <property type="reaction ID" value="UER00074"/>
</dbReference>
<dbReference type="Proteomes" id="UP000008326">
    <property type="component" value="Chromosome"/>
</dbReference>
<dbReference type="GO" id="GO:0005737">
    <property type="term" value="C:cytoplasm"/>
    <property type="evidence" value="ECO:0007669"/>
    <property type="project" value="UniProtKB-SubCell"/>
</dbReference>
<dbReference type="GO" id="GO:0004414">
    <property type="term" value="F:homoserine O-acetyltransferase activity"/>
    <property type="evidence" value="ECO:0007669"/>
    <property type="project" value="UniProtKB-EC"/>
</dbReference>
<dbReference type="GO" id="GO:0008899">
    <property type="term" value="F:homoserine O-succinyltransferase activity"/>
    <property type="evidence" value="ECO:0007669"/>
    <property type="project" value="UniProtKB-UniRule"/>
</dbReference>
<dbReference type="GO" id="GO:0019281">
    <property type="term" value="P:L-methionine biosynthetic process from homoserine via O-succinyl-L-homoserine and cystathionine"/>
    <property type="evidence" value="ECO:0007669"/>
    <property type="project" value="InterPro"/>
</dbReference>
<dbReference type="CDD" id="cd03131">
    <property type="entry name" value="GATase1_HTS"/>
    <property type="match status" value="1"/>
</dbReference>
<dbReference type="Gene3D" id="3.40.50.880">
    <property type="match status" value="1"/>
</dbReference>
<dbReference type="HAMAP" id="MF_00295">
    <property type="entry name" value="MetA_acyltransf"/>
    <property type="match status" value="1"/>
</dbReference>
<dbReference type="InterPro" id="IPR029062">
    <property type="entry name" value="Class_I_gatase-like"/>
</dbReference>
<dbReference type="InterPro" id="IPR005697">
    <property type="entry name" value="HST_MetA"/>
</dbReference>
<dbReference type="InterPro" id="IPR033752">
    <property type="entry name" value="MetA_family"/>
</dbReference>
<dbReference type="NCBIfam" id="TIGR01001">
    <property type="entry name" value="metA"/>
    <property type="match status" value="1"/>
</dbReference>
<dbReference type="PANTHER" id="PTHR20919">
    <property type="entry name" value="HOMOSERINE O-SUCCINYLTRANSFERASE"/>
    <property type="match status" value="1"/>
</dbReference>
<dbReference type="PANTHER" id="PTHR20919:SF0">
    <property type="entry name" value="HOMOSERINE O-SUCCINYLTRANSFERASE"/>
    <property type="match status" value="1"/>
</dbReference>
<dbReference type="Pfam" id="PF04204">
    <property type="entry name" value="HTS"/>
    <property type="match status" value="1"/>
</dbReference>
<dbReference type="PIRSF" id="PIRSF000450">
    <property type="entry name" value="H_ser_succinyltr"/>
    <property type="match status" value="1"/>
</dbReference>
<dbReference type="SUPFAM" id="SSF52317">
    <property type="entry name" value="Class I glutamine amidotransferase-like"/>
    <property type="match status" value="1"/>
</dbReference>
<protein>
    <recommendedName>
        <fullName evidence="1">Homoserine O-acetyltransferase</fullName>
        <shortName evidence="1">HAT</shortName>
        <ecNumber evidence="1">2.3.1.31</ecNumber>
    </recommendedName>
    <alternativeName>
        <fullName evidence="1">Homoserine transacetylase</fullName>
        <shortName evidence="1">HTA</shortName>
    </alternativeName>
</protein>
<gene>
    <name evidence="1" type="primary">metAA</name>
    <name type="ordered locus">Jann_2351</name>
</gene>
<sequence>MPIKLPDTLPAYDILSREGVMVMPEDGAAKQDIRPLRIGLLNLMPKKIQTETQFARLIGASPLQIELSLIRMSDHESKNTSAAHMDEFYRTFSEVQATGEKFDGLLITGAPIEHLPFEDVTYWDELIQVMDWTQTNVHSTFGICWGGMAMAYHFHGIKKHMLDAKAFGCFRHVNQAPASPYLRGFSDDVLMPVSRWTEVRSDEIAAAGLSTLIGSDDVGPALVEDADHRALYVFNHFEYDSETLKQEYDRDADAGAPINVPVNYYPGDDPTATPMNRWRSHAHLLYGNWVSELYLTTPYDIEQIGLASTDLRK</sequence>
<name>METAA_JANSC</name>
<proteinExistence type="inferred from homology"/>
<comment type="function">
    <text evidence="1">Transfers an acetyl group from acetyl-CoA to L-homoserine, forming acetyl-L-homoserine.</text>
</comment>
<comment type="catalytic activity">
    <reaction evidence="1">
        <text>L-homoserine + acetyl-CoA = O-acetyl-L-homoserine + CoA</text>
        <dbReference type="Rhea" id="RHEA:13701"/>
        <dbReference type="ChEBI" id="CHEBI:57287"/>
        <dbReference type="ChEBI" id="CHEBI:57288"/>
        <dbReference type="ChEBI" id="CHEBI:57476"/>
        <dbReference type="ChEBI" id="CHEBI:57716"/>
        <dbReference type="EC" id="2.3.1.31"/>
    </reaction>
</comment>
<comment type="pathway">
    <text evidence="1">Amino-acid biosynthesis; L-methionine biosynthesis via de novo pathway; O-acetyl-L-homoserine from L-homoserine: step 1/1.</text>
</comment>
<comment type="subcellular location">
    <subcellularLocation>
        <location evidence="1">Cytoplasm</location>
    </subcellularLocation>
</comment>
<comment type="similarity">
    <text evidence="1">Belongs to the MetA family.</text>
</comment>